<sequence>MKKLIIAGKEFNSRLFLGTGKFNSNTVMEEAILASGCEMVTVAMKRIELDDKEDDMLKHIIHPHIQLLPNTSGVRTAEEAVFAAQMAREAFGTNWLKLEIHPDPRYLLPDSTETLKATEELVKLGFVVLPYCQADPTLCKRLEEAGAATVMPLAAPIGTNKGLQTRDFLRIIIEQASVPVVVDAGIGAPSHATEAMEMGADACLVNTAIAVAGQPVEMAIAFKEAVIAGRRAYEAGLGAVGQNLIASASSPLTSFLD</sequence>
<reference key="1">
    <citation type="journal article" date="2007" name="PLoS Biol.">
        <title>Evolution of symbiotic bacteria in the distal human intestine.</title>
        <authorList>
            <person name="Xu J."/>
            <person name="Mahowald M.A."/>
            <person name="Ley R.E."/>
            <person name="Lozupone C.A."/>
            <person name="Hamady M."/>
            <person name="Martens E.C."/>
            <person name="Henrissat B."/>
            <person name="Coutinho P.M."/>
            <person name="Minx P."/>
            <person name="Latreille P."/>
            <person name="Cordum H."/>
            <person name="Van Brunt A."/>
            <person name="Kim K."/>
            <person name="Fulton R.S."/>
            <person name="Fulton L.A."/>
            <person name="Clifton S.W."/>
            <person name="Wilson R.K."/>
            <person name="Knight R.D."/>
            <person name="Gordon J.I."/>
        </authorList>
    </citation>
    <scope>NUCLEOTIDE SEQUENCE [LARGE SCALE GENOMIC DNA]</scope>
    <source>
        <strain>ATCC 8482 / DSM 1447 / JCM 5826 / CCUG 4940 / NBRC 14291 / NCTC 11154</strain>
    </source>
</reference>
<protein>
    <recommendedName>
        <fullName evidence="1">Thiazole synthase</fullName>
        <ecNumber evidence="1">2.8.1.10</ecNumber>
    </recommendedName>
</protein>
<dbReference type="EC" id="2.8.1.10" evidence="1"/>
<dbReference type="EMBL" id="CP000139">
    <property type="protein sequence ID" value="ABR41160.1"/>
    <property type="molecule type" value="Genomic_DNA"/>
</dbReference>
<dbReference type="RefSeq" id="WP_005852753.1">
    <property type="nucleotide sequence ID" value="NZ_JANSWM010000078.1"/>
</dbReference>
<dbReference type="SMR" id="A6L646"/>
<dbReference type="STRING" id="435590.BVU_3542"/>
<dbReference type="PaxDb" id="435590-BVU_3542"/>
<dbReference type="GeneID" id="5304502"/>
<dbReference type="KEGG" id="bvu:BVU_3542"/>
<dbReference type="eggNOG" id="COG2022">
    <property type="taxonomic scope" value="Bacteria"/>
</dbReference>
<dbReference type="HOGENOM" id="CLU_062233_1_0_10"/>
<dbReference type="BioCyc" id="BVUL435590:G1G59-3674-MONOMER"/>
<dbReference type="UniPathway" id="UPA00060"/>
<dbReference type="Proteomes" id="UP000002861">
    <property type="component" value="Chromosome"/>
</dbReference>
<dbReference type="GO" id="GO:0005737">
    <property type="term" value="C:cytoplasm"/>
    <property type="evidence" value="ECO:0007669"/>
    <property type="project" value="UniProtKB-SubCell"/>
</dbReference>
<dbReference type="GO" id="GO:1990107">
    <property type="term" value="F:thiazole synthase activity"/>
    <property type="evidence" value="ECO:0007669"/>
    <property type="project" value="UniProtKB-EC"/>
</dbReference>
<dbReference type="GO" id="GO:0009229">
    <property type="term" value="P:thiamine diphosphate biosynthetic process"/>
    <property type="evidence" value="ECO:0007669"/>
    <property type="project" value="UniProtKB-UniRule"/>
</dbReference>
<dbReference type="CDD" id="cd04728">
    <property type="entry name" value="ThiG"/>
    <property type="match status" value="1"/>
</dbReference>
<dbReference type="FunFam" id="3.20.20.70:FF:000049">
    <property type="entry name" value="Thiazole synthase"/>
    <property type="match status" value="1"/>
</dbReference>
<dbReference type="Gene3D" id="3.20.20.70">
    <property type="entry name" value="Aldolase class I"/>
    <property type="match status" value="1"/>
</dbReference>
<dbReference type="HAMAP" id="MF_00443">
    <property type="entry name" value="ThiG"/>
    <property type="match status" value="1"/>
</dbReference>
<dbReference type="InterPro" id="IPR013785">
    <property type="entry name" value="Aldolase_TIM"/>
</dbReference>
<dbReference type="InterPro" id="IPR033983">
    <property type="entry name" value="Thiazole_synthase_ThiG"/>
</dbReference>
<dbReference type="InterPro" id="IPR008867">
    <property type="entry name" value="ThiG"/>
</dbReference>
<dbReference type="PANTHER" id="PTHR34266">
    <property type="entry name" value="THIAZOLE SYNTHASE"/>
    <property type="match status" value="1"/>
</dbReference>
<dbReference type="PANTHER" id="PTHR34266:SF2">
    <property type="entry name" value="THIAZOLE SYNTHASE"/>
    <property type="match status" value="1"/>
</dbReference>
<dbReference type="Pfam" id="PF05690">
    <property type="entry name" value="ThiG"/>
    <property type="match status" value="1"/>
</dbReference>
<dbReference type="SUPFAM" id="SSF110399">
    <property type="entry name" value="ThiG-like"/>
    <property type="match status" value="1"/>
</dbReference>
<organism>
    <name type="scientific">Phocaeicola vulgatus (strain ATCC 8482 / DSM 1447 / JCM 5826 / CCUG 4940 / NBRC 14291 / NCTC 11154)</name>
    <name type="common">Bacteroides vulgatus</name>
    <dbReference type="NCBI Taxonomy" id="435590"/>
    <lineage>
        <taxon>Bacteria</taxon>
        <taxon>Pseudomonadati</taxon>
        <taxon>Bacteroidota</taxon>
        <taxon>Bacteroidia</taxon>
        <taxon>Bacteroidales</taxon>
        <taxon>Bacteroidaceae</taxon>
        <taxon>Phocaeicola</taxon>
    </lineage>
</organism>
<feature type="chain" id="PRO_1000025994" description="Thiazole synthase">
    <location>
        <begin position="1"/>
        <end position="257"/>
    </location>
</feature>
<feature type="active site" description="Schiff-base intermediate with DXP" evidence="1">
    <location>
        <position position="97"/>
    </location>
</feature>
<feature type="binding site" evidence="1">
    <location>
        <position position="158"/>
    </location>
    <ligand>
        <name>1-deoxy-D-xylulose 5-phosphate</name>
        <dbReference type="ChEBI" id="CHEBI:57792"/>
    </ligand>
</feature>
<feature type="binding site" evidence="1">
    <location>
        <begin position="184"/>
        <end position="185"/>
    </location>
    <ligand>
        <name>1-deoxy-D-xylulose 5-phosphate</name>
        <dbReference type="ChEBI" id="CHEBI:57792"/>
    </ligand>
</feature>
<feature type="binding site" evidence="1">
    <location>
        <begin position="206"/>
        <end position="207"/>
    </location>
    <ligand>
        <name>1-deoxy-D-xylulose 5-phosphate</name>
        <dbReference type="ChEBI" id="CHEBI:57792"/>
    </ligand>
</feature>
<keyword id="KW-0963">Cytoplasm</keyword>
<keyword id="KW-0704">Schiff base</keyword>
<keyword id="KW-0784">Thiamine biosynthesis</keyword>
<keyword id="KW-0808">Transferase</keyword>
<comment type="function">
    <text evidence="1">Catalyzes the rearrangement of 1-deoxy-D-xylulose 5-phosphate (DXP) to produce the thiazole phosphate moiety of thiamine. Sulfur is provided by the thiocarboxylate moiety of the carrier protein ThiS. In vitro, sulfur can be provided by H(2)S.</text>
</comment>
<comment type="catalytic activity">
    <reaction evidence="1">
        <text>[ThiS sulfur-carrier protein]-C-terminal-Gly-aminoethanethioate + 2-iminoacetate + 1-deoxy-D-xylulose 5-phosphate = [ThiS sulfur-carrier protein]-C-terminal Gly-Gly + 2-[(2R,5Z)-2-carboxy-4-methylthiazol-5(2H)-ylidene]ethyl phosphate + 2 H2O + H(+)</text>
        <dbReference type="Rhea" id="RHEA:26297"/>
        <dbReference type="Rhea" id="RHEA-COMP:12909"/>
        <dbReference type="Rhea" id="RHEA-COMP:19908"/>
        <dbReference type="ChEBI" id="CHEBI:15377"/>
        <dbReference type="ChEBI" id="CHEBI:15378"/>
        <dbReference type="ChEBI" id="CHEBI:57792"/>
        <dbReference type="ChEBI" id="CHEBI:62899"/>
        <dbReference type="ChEBI" id="CHEBI:77846"/>
        <dbReference type="ChEBI" id="CHEBI:90778"/>
        <dbReference type="ChEBI" id="CHEBI:232372"/>
        <dbReference type="EC" id="2.8.1.10"/>
    </reaction>
</comment>
<comment type="pathway">
    <text evidence="1">Cofactor biosynthesis; thiamine diphosphate biosynthesis.</text>
</comment>
<comment type="subunit">
    <text evidence="1">Homotetramer. Forms heterodimers with either ThiH or ThiS.</text>
</comment>
<comment type="subcellular location">
    <subcellularLocation>
        <location evidence="1">Cytoplasm</location>
    </subcellularLocation>
</comment>
<comment type="similarity">
    <text evidence="1">Belongs to the ThiG family.</text>
</comment>
<evidence type="ECO:0000255" key="1">
    <source>
        <dbReference type="HAMAP-Rule" id="MF_00443"/>
    </source>
</evidence>
<proteinExistence type="inferred from homology"/>
<accession>A6L646</accession>
<gene>
    <name evidence="1" type="primary">thiG</name>
    <name type="ordered locus">BVU_3542</name>
</gene>
<name>THIG_PHOV8</name>